<keyword id="KW-0963">Cytoplasm</keyword>
<keyword id="KW-0210">Decarboxylase</keyword>
<keyword id="KW-0456">Lyase</keyword>
<keyword id="KW-0627">Porphyrin biosynthesis</keyword>
<proteinExistence type="inferred from homology"/>
<comment type="function">
    <text evidence="1">Catalyzes the decarboxylation of four acetate groups of uroporphyrinogen-III to yield coproporphyrinogen-III.</text>
</comment>
<comment type="catalytic activity">
    <reaction evidence="1">
        <text>uroporphyrinogen III + 4 H(+) = coproporphyrinogen III + 4 CO2</text>
        <dbReference type="Rhea" id="RHEA:19865"/>
        <dbReference type="ChEBI" id="CHEBI:15378"/>
        <dbReference type="ChEBI" id="CHEBI:16526"/>
        <dbReference type="ChEBI" id="CHEBI:57308"/>
        <dbReference type="ChEBI" id="CHEBI:57309"/>
        <dbReference type="EC" id="4.1.1.37"/>
    </reaction>
</comment>
<comment type="pathway">
    <text evidence="1">Porphyrin-containing compound metabolism; protoporphyrin-IX biosynthesis; coproporphyrinogen-III from 5-aminolevulinate: step 4/4.</text>
</comment>
<comment type="subunit">
    <text evidence="1">Homodimer.</text>
</comment>
<comment type="subcellular location">
    <subcellularLocation>
        <location evidence="1">Cytoplasm</location>
    </subcellularLocation>
</comment>
<comment type="similarity">
    <text evidence="1">Belongs to the uroporphyrinogen decarboxylase family.</text>
</comment>
<feature type="chain" id="PRO_1000099967" description="Uroporphyrinogen decarboxylase">
    <location>
        <begin position="1"/>
        <end position="357"/>
    </location>
</feature>
<feature type="binding site" evidence="1">
    <location>
        <begin position="27"/>
        <end position="31"/>
    </location>
    <ligand>
        <name>substrate</name>
    </ligand>
</feature>
<feature type="binding site" evidence="1">
    <location>
        <position position="77"/>
    </location>
    <ligand>
        <name>substrate</name>
    </ligand>
</feature>
<feature type="binding site" evidence="1">
    <location>
        <position position="154"/>
    </location>
    <ligand>
        <name>substrate</name>
    </ligand>
</feature>
<feature type="binding site" evidence="1">
    <location>
        <position position="209"/>
    </location>
    <ligand>
        <name>substrate</name>
    </ligand>
</feature>
<feature type="binding site" evidence="1">
    <location>
        <position position="330"/>
    </location>
    <ligand>
        <name>substrate</name>
    </ligand>
</feature>
<feature type="site" description="Transition state stabilizer" evidence="1">
    <location>
        <position position="77"/>
    </location>
</feature>
<sequence length="357" mass="39422">MTTLKNDRFLRALLREPVDTTPIWMMRQAGRYLPEYRETRSKAGDFLSLCKNTEFACEVTLQPLRRYDLDAAILFSDILTIPDALGLGLYFETGEGPKFHKTVRTEQDVANLPKLNAKADLDYVMNAVSTIRSALGGQVPLIGFSGSPWTLATYMVEGGSSKEFRFTKQMMYAQPEVLHALLDHLADSVIDYLNAQIDAGAQAIQIFDSWGGALAHREYVEFSLNYMNKIIAGLQREKDGRRIPVIVFTKGGGQWLEPMITTGADALGLDWTTPLNTARNVVSGRVALQGNLDPAVLYGSAASIEKAVKAMLDDAYANGEKTGYVANLGHGITQWVDPAQPKIFVDTVHEYSAKYLG</sequence>
<reference key="1">
    <citation type="journal article" date="2008" name="PLoS ONE">
        <title>Comparative analysis of Acinetobacters: three genomes for three lifestyles.</title>
        <authorList>
            <person name="Vallenet D."/>
            <person name="Nordmann P."/>
            <person name="Barbe V."/>
            <person name="Poirel L."/>
            <person name="Mangenot S."/>
            <person name="Bataille E."/>
            <person name="Dossat C."/>
            <person name="Gas S."/>
            <person name="Kreimeyer A."/>
            <person name="Lenoble P."/>
            <person name="Oztas S."/>
            <person name="Poulain J."/>
            <person name="Segurens B."/>
            <person name="Robert C."/>
            <person name="Abergel C."/>
            <person name="Claverie J.-M."/>
            <person name="Raoult D."/>
            <person name="Medigue C."/>
            <person name="Weissenbach J."/>
            <person name="Cruveiller S."/>
        </authorList>
    </citation>
    <scope>NUCLEOTIDE SEQUENCE [LARGE SCALE GENOMIC DNA]</scope>
    <source>
        <strain>SDF</strain>
    </source>
</reference>
<gene>
    <name evidence="1" type="primary">hemE</name>
    <name type="ordered locus">ABSDF1150</name>
</gene>
<protein>
    <recommendedName>
        <fullName evidence="1">Uroporphyrinogen decarboxylase</fullName>
        <shortName evidence="1">UPD</shortName>
        <shortName evidence="1">URO-D</shortName>
        <ecNumber evidence="1">4.1.1.37</ecNumber>
    </recommendedName>
</protein>
<dbReference type="EC" id="4.1.1.37" evidence="1"/>
<dbReference type="EMBL" id="CU468230">
    <property type="protein sequence ID" value="CAP00499.1"/>
    <property type="molecule type" value="Genomic_DNA"/>
</dbReference>
<dbReference type="SMR" id="B0VUQ9"/>
<dbReference type="KEGG" id="abm:ABSDF1150"/>
<dbReference type="HOGENOM" id="CLU_040933_0_0_6"/>
<dbReference type="UniPathway" id="UPA00251">
    <property type="reaction ID" value="UER00321"/>
</dbReference>
<dbReference type="Proteomes" id="UP000001741">
    <property type="component" value="Chromosome"/>
</dbReference>
<dbReference type="GO" id="GO:0005829">
    <property type="term" value="C:cytosol"/>
    <property type="evidence" value="ECO:0007669"/>
    <property type="project" value="TreeGrafter"/>
</dbReference>
<dbReference type="GO" id="GO:0004853">
    <property type="term" value="F:uroporphyrinogen decarboxylase activity"/>
    <property type="evidence" value="ECO:0007669"/>
    <property type="project" value="UniProtKB-UniRule"/>
</dbReference>
<dbReference type="GO" id="GO:0019353">
    <property type="term" value="P:protoporphyrinogen IX biosynthetic process from glutamate"/>
    <property type="evidence" value="ECO:0007669"/>
    <property type="project" value="TreeGrafter"/>
</dbReference>
<dbReference type="CDD" id="cd00717">
    <property type="entry name" value="URO-D"/>
    <property type="match status" value="1"/>
</dbReference>
<dbReference type="FunFam" id="3.20.20.210:FF:000001">
    <property type="entry name" value="Uroporphyrinogen decarboxylase"/>
    <property type="match status" value="1"/>
</dbReference>
<dbReference type="Gene3D" id="3.20.20.210">
    <property type="match status" value="1"/>
</dbReference>
<dbReference type="HAMAP" id="MF_00218">
    <property type="entry name" value="URO_D"/>
    <property type="match status" value="1"/>
</dbReference>
<dbReference type="InterPro" id="IPR038071">
    <property type="entry name" value="UROD/MetE-like_sf"/>
</dbReference>
<dbReference type="InterPro" id="IPR006361">
    <property type="entry name" value="Uroporphyrinogen_deCO2ase_HemE"/>
</dbReference>
<dbReference type="InterPro" id="IPR000257">
    <property type="entry name" value="Uroporphyrinogen_deCOase"/>
</dbReference>
<dbReference type="NCBIfam" id="TIGR01464">
    <property type="entry name" value="hemE"/>
    <property type="match status" value="1"/>
</dbReference>
<dbReference type="PANTHER" id="PTHR21091">
    <property type="entry name" value="METHYLTETRAHYDROFOLATE:HOMOCYSTEINE METHYLTRANSFERASE RELATED"/>
    <property type="match status" value="1"/>
</dbReference>
<dbReference type="PANTHER" id="PTHR21091:SF169">
    <property type="entry name" value="UROPORPHYRINOGEN DECARBOXYLASE"/>
    <property type="match status" value="1"/>
</dbReference>
<dbReference type="Pfam" id="PF01208">
    <property type="entry name" value="URO-D"/>
    <property type="match status" value="1"/>
</dbReference>
<dbReference type="SUPFAM" id="SSF51726">
    <property type="entry name" value="UROD/MetE-like"/>
    <property type="match status" value="1"/>
</dbReference>
<dbReference type="PROSITE" id="PS00906">
    <property type="entry name" value="UROD_1"/>
    <property type="match status" value="1"/>
</dbReference>
<dbReference type="PROSITE" id="PS00907">
    <property type="entry name" value="UROD_2"/>
    <property type="match status" value="1"/>
</dbReference>
<name>DCUP_ACIBS</name>
<organism>
    <name type="scientific">Acinetobacter baumannii (strain SDF)</name>
    <dbReference type="NCBI Taxonomy" id="509170"/>
    <lineage>
        <taxon>Bacteria</taxon>
        <taxon>Pseudomonadati</taxon>
        <taxon>Pseudomonadota</taxon>
        <taxon>Gammaproteobacteria</taxon>
        <taxon>Moraxellales</taxon>
        <taxon>Moraxellaceae</taxon>
        <taxon>Acinetobacter</taxon>
        <taxon>Acinetobacter calcoaceticus/baumannii complex</taxon>
    </lineage>
</organism>
<evidence type="ECO:0000255" key="1">
    <source>
        <dbReference type="HAMAP-Rule" id="MF_00218"/>
    </source>
</evidence>
<accession>B0VUQ9</accession>